<name>SYTL5_MOUSE</name>
<proteinExistence type="evidence at protein level"/>
<evidence type="ECO:0000250" key="1"/>
<evidence type="ECO:0000255" key="2">
    <source>
        <dbReference type="PROSITE-ProRule" id="PRU00041"/>
    </source>
</evidence>
<evidence type="ECO:0000255" key="3">
    <source>
        <dbReference type="PROSITE-ProRule" id="PRU00234"/>
    </source>
</evidence>
<evidence type="ECO:0000256" key="4">
    <source>
        <dbReference type="SAM" id="MobiDB-lite"/>
    </source>
</evidence>
<evidence type="ECO:0000303" key="5">
    <source>
    </source>
</evidence>
<evidence type="ECO:0007744" key="6">
    <source>
    </source>
</evidence>
<feature type="chain" id="PRO_0000190220" description="Synaptotagmin-like protein 5">
    <location>
        <begin position="1"/>
        <end position="753"/>
    </location>
</feature>
<feature type="domain" description="RabBD" evidence="3">
    <location>
        <begin position="7"/>
        <end position="123"/>
    </location>
</feature>
<feature type="domain" description="C2 1" evidence="2">
    <location>
        <begin position="429"/>
        <end position="550"/>
    </location>
</feature>
<feature type="domain" description="C2 2" evidence="2">
    <location>
        <begin position="597"/>
        <end position="717"/>
    </location>
</feature>
<feature type="zinc finger region" description="FYVE-type">
    <location>
        <begin position="64"/>
        <end position="106"/>
    </location>
</feature>
<feature type="region of interest" description="Disordered" evidence="4">
    <location>
        <begin position="145"/>
        <end position="279"/>
    </location>
</feature>
<feature type="region of interest" description="Disordered" evidence="4">
    <location>
        <begin position="297"/>
        <end position="359"/>
    </location>
</feature>
<feature type="region of interest" description="Disordered" evidence="4">
    <location>
        <begin position="380"/>
        <end position="404"/>
    </location>
</feature>
<feature type="compositionally biased region" description="Polar residues" evidence="4">
    <location>
        <begin position="150"/>
        <end position="174"/>
    </location>
</feature>
<feature type="compositionally biased region" description="Basic and acidic residues" evidence="4">
    <location>
        <begin position="195"/>
        <end position="206"/>
    </location>
</feature>
<feature type="compositionally biased region" description="Polar residues" evidence="4">
    <location>
        <begin position="214"/>
        <end position="223"/>
    </location>
</feature>
<feature type="compositionally biased region" description="Low complexity" evidence="4">
    <location>
        <begin position="224"/>
        <end position="237"/>
    </location>
</feature>
<feature type="compositionally biased region" description="Polar residues" evidence="4">
    <location>
        <begin position="249"/>
        <end position="275"/>
    </location>
</feature>
<feature type="compositionally biased region" description="Polar residues" evidence="4">
    <location>
        <begin position="380"/>
        <end position="391"/>
    </location>
</feature>
<feature type="modified residue" description="Phosphoserine" evidence="6">
    <location>
        <position position="147"/>
    </location>
</feature>
<feature type="splice variant" id="VSP_007905" description="In isoform 2." evidence="5">
    <location>
        <begin position="387"/>
        <end position="408"/>
    </location>
</feature>
<accession>Q80T23</accession>
<accession>A2AF59</accession>
<accession>Q812E5</accession>
<keyword id="KW-0025">Alternative splicing</keyword>
<keyword id="KW-0472">Membrane</keyword>
<keyword id="KW-0479">Metal-binding</keyword>
<keyword id="KW-0597">Phosphoprotein</keyword>
<keyword id="KW-1185">Reference proteome</keyword>
<keyword id="KW-0677">Repeat</keyword>
<keyword id="KW-0862">Zinc</keyword>
<keyword id="KW-0863">Zinc-finger</keyword>
<reference key="1">
    <citation type="journal article" date="2003" name="J. Biol. Chem.">
        <title>Slp4-a/granuphilin-a inhibits dense-core vesicle exocytosis through interaction with the GDP-bound form of Rab27A in PC12 cells.</title>
        <authorList>
            <person name="Fukuda M."/>
        </authorList>
    </citation>
    <scope>NUCLEOTIDE SEQUENCE [MRNA] (ISOFORMS 1 AND 2)</scope>
    <scope>INTERACTION WITH RAB27A</scope>
    <source>
        <strain>BALB/cJ</strain>
        <tissue>Spleen</tissue>
        <tissue>Testis</tissue>
    </source>
</reference>
<reference key="2">
    <citation type="journal article" date="2009" name="PLoS Biol.">
        <title>Lineage-specific biology revealed by a finished genome assembly of the mouse.</title>
        <authorList>
            <person name="Church D.M."/>
            <person name="Goodstadt L."/>
            <person name="Hillier L.W."/>
            <person name="Zody M.C."/>
            <person name="Goldstein S."/>
            <person name="She X."/>
            <person name="Bult C.J."/>
            <person name="Agarwala R."/>
            <person name="Cherry J.L."/>
            <person name="DiCuccio M."/>
            <person name="Hlavina W."/>
            <person name="Kapustin Y."/>
            <person name="Meric P."/>
            <person name="Maglott D."/>
            <person name="Birtle Z."/>
            <person name="Marques A.C."/>
            <person name="Graves T."/>
            <person name="Zhou S."/>
            <person name="Teague B."/>
            <person name="Potamousis K."/>
            <person name="Churas C."/>
            <person name="Place M."/>
            <person name="Herschleb J."/>
            <person name="Runnheim R."/>
            <person name="Forrest D."/>
            <person name="Amos-Landgraf J."/>
            <person name="Schwartz D.C."/>
            <person name="Cheng Z."/>
            <person name="Lindblad-Toh K."/>
            <person name="Eichler E.E."/>
            <person name="Ponting C.P."/>
        </authorList>
    </citation>
    <scope>NUCLEOTIDE SEQUENCE [LARGE SCALE GENOMIC DNA]</scope>
    <source>
        <strain>C57BL/6J</strain>
    </source>
</reference>
<reference key="3">
    <citation type="journal article" date="2010" name="Cell">
        <title>A tissue-specific atlas of mouse protein phosphorylation and expression.</title>
        <authorList>
            <person name="Huttlin E.L."/>
            <person name="Jedrychowski M.P."/>
            <person name="Elias J.E."/>
            <person name="Goswami T."/>
            <person name="Rad R."/>
            <person name="Beausoleil S.A."/>
            <person name="Villen J."/>
            <person name="Haas W."/>
            <person name="Sowa M.E."/>
            <person name="Gygi S.P."/>
        </authorList>
    </citation>
    <scope>PHOSPHORYLATION [LARGE SCALE ANALYSIS] AT SER-147</scope>
    <scope>IDENTIFICATION BY MASS SPECTROMETRY [LARGE SCALE ANALYSIS]</scope>
    <source>
        <tissue>Pancreas</tissue>
    </source>
</reference>
<sequence>MSKNSEFINLSFLLDHEKEMILGVLKRDEYLKKVEDKRIRKLKNELLEAKRRSGKTHQEASRVCVHCHKTLGLIFDRGDPCQACSLRVCSECRVTGLDGSWKCTVCAKVAQLRIISGEWFLEEKAKRFKQVNVLGTDVVRQSILRRSPGSEETQNQEQAQQCVDKSDTLSSVRQKTTHDGPKKKGFLLSKFRSATRGEIRTPKPESGRSYSLDLDSQNLQSFKSASGSDRGSTTSSDLIDQEAGRRTSKSSYSNGGIPVTQRSPVPSAHSVTSINSREHGFENSMALATIENTCEELTKSHRRNTSGTPSIAVSGTSLSSERSRSEVDLSESFAEDLEDTSSIRSRSVPGALDKDLNSLEDTEDGVDLVSSRFSANTHSLASGLSTNSQAGSDRKRSYLNVPDADSDTTSLNSMMSVYSETGDYGNVKVTGEILLHISYCYKTGGLYIFVKSCRNLATGDEKKQRTDAYVKSYLLPDKSRNNKRKTKIRTGTNPEFNETLKYTISHTQLETRTLQLSVWHYDRFGRNSFLGEVEIAFDSWNFENPCDEWFVLQPKVELAPDISLQYKGELTIVLRYIPPEENLIFPAGQRQEKKIFKRGKKKESSSISGGILEVFIKKAKNLTAVKSGGTSDSFVKGYLLPDDNKATKHKTAVVKKSVNPEWNHTFIFSGLYPQDIKNACLELTIWDKEAFSSNVFLGGVRLNSGSGMSYGKTVDWMDSHGEEQRLWQKMADNPGTSVEGVLMLRSSMAKCRL</sequence>
<protein>
    <recommendedName>
        <fullName>Synaptotagmin-like protein 5</fullName>
    </recommendedName>
</protein>
<comment type="function">
    <text evidence="1">May act as Rab effector protein and play a role in vesicle trafficking. Binds phospholipids (By similarity).</text>
</comment>
<comment type="subunit">
    <text>Binds RAB27A that has been activated by GTP-binding.</text>
</comment>
<comment type="subcellular location">
    <subcellularLocation>
        <location evidence="1">Membrane</location>
        <topology evidence="1">Peripheral membrane protein</topology>
    </subcellularLocation>
</comment>
<comment type="alternative products">
    <event type="alternative splicing"/>
    <isoform>
        <id>Q80T23-1</id>
        <name>1</name>
        <sequence type="displayed"/>
    </isoform>
    <isoform>
        <id>Q80T23-2</id>
        <name>2</name>
        <name>Slp5 delta 5S-I</name>
        <sequence type="described" ref="VSP_007905"/>
    </isoform>
</comment>
<dbReference type="EMBL" id="AB098160">
    <property type="protein sequence ID" value="BAC57421.1"/>
    <property type="molecule type" value="mRNA"/>
</dbReference>
<dbReference type="EMBL" id="AB098161">
    <property type="protein sequence ID" value="BAC57422.1"/>
    <property type="molecule type" value="mRNA"/>
</dbReference>
<dbReference type="EMBL" id="AL672031">
    <property type="status" value="NOT_ANNOTATED_CDS"/>
    <property type="molecule type" value="Genomic_DNA"/>
</dbReference>
<dbReference type="CCDS" id="CCDS40860.1">
    <molecule id="Q80T23-1"/>
</dbReference>
<dbReference type="CCDS" id="CCDS72342.1">
    <molecule id="Q80T23-2"/>
</dbReference>
<dbReference type="RefSeq" id="NP_001277657.1">
    <molecule id="Q80T23-2"/>
    <property type="nucleotide sequence ID" value="NM_001290728.1"/>
</dbReference>
<dbReference type="RefSeq" id="NP_808372.1">
    <molecule id="Q80T23-1"/>
    <property type="nucleotide sequence ID" value="NM_177704.3"/>
</dbReference>
<dbReference type="RefSeq" id="XP_006527667.1">
    <molecule id="Q80T23-1"/>
    <property type="nucleotide sequence ID" value="XM_006527604.5"/>
</dbReference>
<dbReference type="RefSeq" id="XP_006527670.1">
    <molecule id="Q80T23-1"/>
    <property type="nucleotide sequence ID" value="XM_006527607.4"/>
</dbReference>
<dbReference type="RefSeq" id="XP_006527671.1">
    <molecule id="Q80T23-1"/>
    <property type="nucleotide sequence ID" value="XM_006527608.5"/>
</dbReference>
<dbReference type="RefSeq" id="XP_011245762.1">
    <molecule id="Q80T23-1"/>
    <property type="nucleotide sequence ID" value="XM_011247460.3"/>
</dbReference>
<dbReference type="RefSeq" id="XP_011245765.1">
    <molecule id="Q80T23-1"/>
    <property type="nucleotide sequence ID" value="XM_011247463.4"/>
</dbReference>
<dbReference type="RefSeq" id="XP_011245766.1">
    <molecule id="Q80T23-1"/>
    <property type="nucleotide sequence ID" value="XM_011247464.2"/>
</dbReference>
<dbReference type="RefSeq" id="XP_011245767.1">
    <molecule id="Q80T23-1"/>
    <property type="nucleotide sequence ID" value="XM_011247465.2"/>
</dbReference>
<dbReference type="RefSeq" id="XP_011245770.1">
    <molecule id="Q80T23-1"/>
    <property type="nucleotide sequence ID" value="XM_011247468.2"/>
</dbReference>
<dbReference type="RefSeq" id="XP_011245771.1">
    <molecule id="Q80T23-1"/>
    <property type="nucleotide sequence ID" value="XM_011247469.4"/>
</dbReference>
<dbReference type="RefSeq" id="XP_011245772.1">
    <molecule id="Q80T23-1"/>
    <property type="nucleotide sequence ID" value="XM_011247470.4"/>
</dbReference>
<dbReference type="RefSeq" id="XP_011245773.1">
    <molecule id="Q80T23-1"/>
    <property type="nucleotide sequence ID" value="XM_011247471.3"/>
</dbReference>
<dbReference type="RefSeq" id="XP_011245775.1">
    <molecule id="Q80T23-2"/>
    <property type="nucleotide sequence ID" value="XM_011247473.2"/>
</dbReference>
<dbReference type="RefSeq" id="XP_017173956.1">
    <molecule id="Q80T23-1"/>
    <property type="nucleotide sequence ID" value="XM_017318467.3"/>
</dbReference>
<dbReference type="RefSeq" id="XP_036017806.1">
    <molecule id="Q80T23-1"/>
    <property type="nucleotide sequence ID" value="XM_036161913.1"/>
</dbReference>
<dbReference type="RefSeq" id="XP_036017807.1">
    <molecule id="Q80T23-1"/>
    <property type="nucleotide sequence ID" value="XM_036161914.1"/>
</dbReference>
<dbReference type="RefSeq" id="XP_036017808.1">
    <molecule id="Q80T23-1"/>
    <property type="nucleotide sequence ID" value="XM_036161915.1"/>
</dbReference>
<dbReference type="SMR" id="Q80T23"/>
<dbReference type="BioGRID" id="231780">
    <property type="interactions" value="1"/>
</dbReference>
<dbReference type="CORUM" id="Q80T23"/>
<dbReference type="FunCoup" id="Q80T23">
    <property type="interactions" value="322"/>
</dbReference>
<dbReference type="IntAct" id="Q80T23">
    <property type="interactions" value="1"/>
</dbReference>
<dbReference type="STRING" id="10090.ENSMUSP00000064826"/>
<dbReference type="GlyGen" id="Q80T23">
    <property type="glycosylation" value="1 site"/>
</dbReference>
<dbReference type="iPTMnet" id="Q80T23"/>
<dbReference type="PhosphoSitePlus" id="Q80T23"/>
<dbReference type="PaxDb" id="10090-ENSMUSP00000064826"/>
<dbReference type="ProteomicsDB" id="253449">
    <molecule id="Q80T23-1"/>
</dbReference>
<dbReference type="ProteomicsDB" id="253450">
    <molecule id="Q80T23-2"/>
</dbReference>
<dbReference type="Antibodypedia" id="10579">
    <property type="antibodies" value="91 antibodies from 23 providers"/>
</dbReference>
<dbReference type="DNASU" id="236643"/>
<dbReference type="Ensembl" id="ENSMUST00000067529.9">
    <molecule id="Q80T23-1"/>
    <property type="protein sequence ID" value="ENSMUSP00000064826.3"/>
    <property type="gene ID" value="ENSMUSG00000054453.12"/>
</dbReference>
<dbReference type="Ensembl" id="ENSMUST00000086165.4">
    <molecule id="Q80T23-2"/>
    <property type="protein sequence ID" value="ENSMUSP00000083339.4"/>
    <property type="gene ID" value="ENSMUSG00000054453.12"/>
</dbReference>
<dbReference type="GeneID" id="236643"/>
<dbReference type="KEGG" id="mmu:236643"/>
<dbReference type="UCSC" id="uc009sqa.2">
    <molecule id="Q80T23-1"/>
    <property type="organism name" value="mouse"/>
</dbReference>
<dbReference type="UCSC" id="uc009sqb.2">
    <molecule id="Q80T23-2"/>
    <property type="organism name" value="mouse"/>
</dbReference>
<dbReference type="AGR" id="MGI:2668451"/>
<dbReference type="CTD" id="94122"/>
<dbReference type="MGI" id="MGI:2668451">
    <property type="gene designation" value="Sytl5"/>
</dbReference>
<dbReference type="VEuPathDB" id="HostDB:ENSMUSG00000054453"/>
<dbReference type="eggNOG" id="KOG1028">
    <property type="taxonomic scope" value="Eukaryota"/>
</dbReference>
<dbReference type="GeneTree" id="ENSGT00940000158618"/>
<dbReference type="HOGENOM" id="CLU_002711_5_0_1"/>
<dbReference type="InParanoid" id="Q80T23"/>
<dbReference type="OMA" id="VEDKRIX"/>
<dbReference type="OrthoDB" id="195679at2759"/>
<dbReference type="PhylomeDB" id="Q80T23"/>
<dbReference type="TreeFam" id="TF341184"/>
<dbReference type="BioGRID-ORCS" id="236643">
    <property type="hits" value="0 hits in 80 CRISPR screens"/>
</dbReference>
<dbReference type="ChiTaRS" id="Sytl5">
    <property type="organism name" value="mouse"/>
</dbReference>
<dbReference type="PRO" id="PR:Q80T23"/>
<dbReference type="Proteomes" id="UP000000589">
    <property type="component" value="Chromosome X"/>
</dbReference>
<dbReference type="RNAct" id="Q80T23">
    <property type="molecule type" value="protein"/>
</dbReference>
<dbReference type="Bgee" id="ENSMUSG00000054453">
    <property type="expression patterns" value="Expressed in uterus and 30 other cell types or tissues"/>
</dbReference>
<dbReference type="ExpressionAtlas" id="Q80T23">
    <property type="expression patterns" value="baseline and differential"/>
</dbReference>
<dbReference type="GO" id="GO:0016020">
    <property type="term" value="C:membrane"/>
    <property type="evidence" value="ECO:0007669"/>
    <property type="project" value="UniProtKB-SubCell"/>
</dbReference>
<dbReference type="GO" id="GO:0005543">
    <property type="term" value="F:phospholipid binding"/>
    <property type="evidence" value="ECO:0007669"/>
    <property type="project" value="InterPro"/>
</dbReference>
<dbReference type="GO" id="GO:0031267">
    <property type="term" value="F:small GTPase binding"/>
    <property type="evidence" value="ECO:0007669"/>
    <property type="project" value="InterPro"/>
</dbReference>
<dbReference type="GO" id="GO:0008270">
    <property type="term" value="F:zinc ion binding"/>
    <property type="evidence" value="ECO:0007669"/>
    <property type="project" value="UniProtKB-KW"/>
</dbReference>
<dbReference type="GO" id="GO:0006887">
    <property type="term" value="P:exocytosis"/>
    <property type="evidence" value="ECO:0000314"/>
    <property type="project" value="MGI"/>
</dbReference>
<dbReference type="GO" id="GO:0006886">
    <property type="term" value="P:intracellular protein transport"/>
    <property type="evidence" value="ECO:0007669"/>
    <property type="project" value="InterPro"/>
</dbReference>
<dbReference type="CDD" id="cd04029">
    <property type="entry name" value="C2A_SLP-4_5"/>
    <property type="match status" value="1"/>
</dbReference>
<dbReference type="CDD" id="cd04020">
    <property type="entry name" value="C2B_SLP_1-2-3-4"/>
    <property type="match status" value="1"/>
</dbReference>
<dbReference type="CDD" id="cd15766">
    <property type="entry name" value="FYVE_Slp5"/>
    <property type="match status" value="1"/>
</dbReference>
<dbReference type="FunFam" id="2.60.40.150:FF:000006">
    <property type="entry name" value="Synaptotagmin-like 5, isoform CRA_a"/>
    <property type="match status" value="1"/>
</dbReference>
<dbReference type="FunFam" id="2.60.40.150:FF:000107">
    <property type="entry name" value="Synaptotagmin-like 5, isoform CRA_a"/>
    <property type="match status" value="1"/>
</dbReference>
<dbReference type="FunFam" id="3.30.40.10:FF:000018">
    <property type="entry name" value="Synaptotagmin-like 5, isoform CRA_a"/>
    <property type="match status" value="1"/>
</dbReference>
<dbReference type="Gene3D" id="2.60.40.150">
    <property type="entry name" value="C2 domain"/>
    <property type="match status" value="2"/>
</dbReference>
<dbReference type="Gene3D" id="3.30.40.10">
    <property type="entry name" value="Zinc/RING finger domain, C3HC4 (zinc finger)"/>
    <property type="match status" value="1"/>
</dbReference>
<dbReference type="InterPro" id="IPR000008">
    <property type="entry name" value="C2_dom"/>
</dbReference>
<dbReference type="InterPro" id="IPR035892">
    <property type="entry name" value="C2_domain_sf"/>
</dbReference>
<dbReference type="InterPro" id="IPR041282">
    <property type="entry name" value="FYVE_2"/>
</dbReference>
<dbReference type="InterPro" id="IPR010911">
    <property type="entry name" value="Rab_BD"/>
</dbReference>
<dbReference type="InterPro" id="IPR037303">
    <property type="entry name" value="SLP-4/5_C2A"/>
</dbReference>
<dbReference type="InterPro" id="IPR043567">
    <property type="entry name" value="SYTL1-5_C2B"/>
</dbReference>
<dbReference type="InterPro" id="IPR042783">
    <property type="entry name" value="SYTL5_FYVE"/>
</dbReference>
<dbReference type="InterPro" id="IPR011011">
    <property type="entry name" value="Znf_FYVE_PHD"/>
</dbReference>
<dbReference type="InterPro" id="IPR013083">
    <property type="entry name" value="Znf_RING/FYVE/PHD"/>
</dbReference>
<dbReference type="PANTHER" id="PTHR45716">
    <property type="entry name" value="BITESIZE, ISOFORM I"/>
    <property type="match status" value="1"/>
</dbReference>
<dbReference type="PANTHER" id="PTHR45716:SF6">
    <property type="entry name" value="SYNAPTOTAGMIN-LIKE PROTEIN 5"/>
    <property type="match status" value="1"/>
</dbReference>
<dbReference type="Pfam" id="PF00168">
    <property type="entry name" value="C2"/>
    <property type="match status" value="2"/>
</dbReference>
<dbReference type="Pfam" id="PF02318">
    <property type="entry name" value="FYVE_2"/>
    <property type="match status" value="1"/>
</dbReference>
<dbReference type="SMART" id="SM00239">
    <property type="entry name" value="C2"/>
    <property type="match status" value="2"/>
</dbReference>
<dbReference type="SUPFAM" id="SSF49562">
    <property type="entry name" value="C2 domain (Calcium/lipid-binding domain, CaLB)"/>
    <property type="match status" value="2"/>
</dbReference>
<dbReference type="SUPFAM" id="SSF57903">
    <property type="entry name" value="FYVE/PHD zinc finger"/>
    <property type="match status" value="1"/>
</dbReference>
<dbReference type="PROSITE" id="PS50004">
    <property type="entry name" value="C2"/>
    <property type="match status" value="2"/>
</dbReference>
<dbReference type="PROSITE" id="PS50916">
    <property type="entry name" value="RABBD"/>
    <property type="match status" value="1"/>
</dbReference>
<gene>
    <name type="primary">Sytl5</name>
    <name type="synonym">Slp5</name>
</gene>
<organism>
    <name type="scientific">Mus musculus</name>
    <name type="common">Mouse</name>
    <dbReference type="NCBI Taxonomy" id="10090"/>
    <lineage>
        <taxon>Eukaryota</taxon>
        <taxon>Metazoa</taxon>
        <taxon>Chordata</taxon>
        <taxon>Craniata</taxon>
        <taxon>Vertebrata</taxon>
        <taxon>Euteleostomi</taxon>
        <taxon>Mammalia</taxon>
        <taxon>Eutheria</taxon>
        <taxon>Euarchontoglires</taxon>
        <taxon>Glires</taxon>
        <taxon>Rodentia</taxon>
        <taxon>Myomorpha</taxon>
        <taxon>Muroidea</taxon>
        <taxon>Muridae</taxon>
        <taxon>Murinae</taxon>
        <taxon>Mus</taxon>
        <taxon>Mus</taxon>
    </lineage>
</organism>